<organism>
    <name type="scientific">Pasteurella multocida (strain Pm70)</name>
    <dbReference type="NCBI Taxonomy" id="272843"/>
    <lineage>
        <taxon>Bacteria</taxon>
        <taxon>Pseudomonadati</taxon>
        <taxon>Pseudomonadota</taxon>
        <taxon>Gammaproteobacteria</taxon>
        <taxon>Pasteurellales</taxon>
        <taxon>Pasteurellaceae</taxon>
        <taxon>Pasteurella</taxon>
    </lineage>
</organism>
<protein>
    <recommendedName>
        <fullName>Magnesium transport protein CorA</fullName>
    </recommendedName>
</protein>
<gene>
    <name type="primary">corA</name>
    <name type="ordered locus">PM1315</name>
</gene>
<evidence type="ECO:0000250" key="1">
    <source>
        <dbReference type="UniProtKB" id="P0ABI4"/>
    </source>
</evidence>
<evidence type="ECO:0000250" key="2">
    <source>
        <dbReference type="UniProtKB" id="Q9WZ31"/>
    </source>
</evidence>
<evidence type="ECO:0000255" key="3"/>
<evidence type="ECO:0000305" key="4"/>
<accession>Q9CLC4</accession>
<name>CORA_PASMU</name>
<sequence>MINAFALEDARLVRIDENTNAELNSAIWLDLIEPSSEEREILQEGLGQSLATFLELEDIEASARFFEDEDGLHLHSFFYCEDEEDYADLASVAFTVRDGRLFTLRDRELPAFRLYRMRSRSQRLIECNAYEVLLDLFETKIEQLADVIETVYSDLEKLSRVILDGTQGEAFDQALSTLTEQEDTSSKVRLCLMDTQRALSFLVRKTRLPANQLEQAREILRDIESLQPHNESLFQRVNFLMQAAMGFISIEQNRIIKIFSVVSVIFLPPTLVASNYGMNFDIMPELGFKFGYPMALGLMALAAFAPYWYFKRKGWL</sequence>
<keyword id="KW-0997">Cell inner membrane</keyword>
<keyword id="KW-1003">Cell membrane</keyword>
<keyword id="KW-0406">Ion transport</keyword>
<keyword id="KW-0460">Magnesium</keyword>
<keyword id="KW-0472">Membrane</keyword>
<keyword id="KW-1185">Reference proteome</keyword>
<keyword id="KW-0812">Transmembrane</keyword>
<keyword id="KW-1133">Transmembrane helix</keyword>
<keyword id="KW-0813">Transport</keyword>
<proteinExistence type="inferred from homology"/>
<reference key="1">
    <citation type="journal article" date="2001" name="Proc. Natl. Acad. Sci. U.S.A.">
        <title>Complete genomic sequence of Pasteurella multocida Pm70.</title>
        <authorList>
            <person name="May B.J."/>
            <person name="Zhang Q."/>
            <person name="Li L.L."/>
            <person name="Paustian M.L."/>
            <person name="Whittam T.S."/>
            <person name="Kapur V."/>
        </authorList>
    </citation>
    <scope>NUCLEOTIDE SEQUENCE [LARGE SCALE GENOMIC DNA]</scope>
    <source>
        <strain>Pm70</strain>
    </source>
</reference>
<feature type="chain" id="PRO_0000239099" description="Magnesium transport protein CorA">
    <location>
        <begin position="1"/>
        <end position="316"/>
    </location>
</feature>
<feature type="transmembrane region" description="Helical" evidence="3">
    <location>
        <begin position="258"/>
        <end position="278"/>
    </location>
</feature>
<feature type="transmembrane region" description="Helical" evidence="3">
    <location>
        <begin position="290"/>
        <end position="310"/>
    </location>
</feature>
<feature type="short sequence motif" description="Probable selectivity filter" evidence="2">
    <location>
        <begin position="277"/>
        <end position="279"/>
    </location>
</feature>
<feature type="site" description="Essential for ion permeation" evidence="2">
    <location>
        <position position="253"/>
    </location>
</feature>
<comment type="function">
    <text evidence="1 2">Mediates influx of magnesium ions (By similarity). Alternates between open and closed states. Activated by low cytoplasmic Mg(2+) levels. Inactive when cytoplasmic Mg(2+) levels are high (By similarity).</text>
</comment>
<comment type="catalytic activity">
    <reaction evidence="1">
        <text>Mg(2+)(in) = Mg(2+)(out)</text>
        <dbReference type="Rhea" id="RHEA:29827"/>
        <dbReference type="ChEBI" id="CHEBI:18420"/>
    </reaction>
</comment>
<comment type="subunit">
    <text evidence="2">Homopentamer. In the absence of Mg(2+), interactions between subunits are weakened, and dimers, trimers and tetramers can be observed in vitro (By similarity).</text>
</comment>
<comment type="subcellular location">
    <subcellularLocation>
        <location evidence="1">Cell inner membrane</location>
        <topology evidence="2">Multi-pass membrane protein</topology>
    </subcellularLocation>
</comment>
<comment type="domain">
    <text evidence="2">The central ion permeation pathway is formed by the first transmembrane domain from each of the five subunits. Mg(2+) binding strengthens interactions between subunits and leads to the formation of a symmetrical homopentamer surrounding a closed ion permeation pathway. Low Mg(2+) concentrations trigger both a conformation change within each subunit and a loosening of the interactions between subunits. This results in an open ion conduction pathway. In addition, this results in a less symmetrical shape of the whole complex.</text>
</comment>
<comment type="similarity">
    <text evidence="4">Belongs to the CorA metal ion transporter (MIT) (TC 1.A.35) family.</text>
</comment>
<dbReference type="EMBL" id="AE004439">
    <property type="protein sequence ID" value="AAK03399.1"/>
    <property type="molecule type" value="Genomic_DNA"/>
</dbReference>
<dbReference type="RefSeq" id="WP_005717802.1">
    <property type="nucleotide sequence ID" value="NC_002663.1"/>
</dbReference>
<dbReference type="SMR" id="Q9CLC4"/>
<dbReference type="STRING" id="272843.PM1315"/>
<dbReference type="EnsemblBacteria" id="AAK03399">
    <property type="protein sequence ID" value="AAK03399"/>
    <property type="gene ID" value="PM1315"/>
</dbReference>
<dbReference type="GeneID" id="77206729"/>
<dbReference type="KEGG" id="pmu:PM1315"/>
<dbReference type="HOGENOM" id="CLU_007127_5_0_6"/>
<dbReference type="OrthoDB" id="9803416at2"/>
<dbReference type="Proteomes" id="UP000000809">
    <property type="component" value="Chromosome"/>
</dbReference>
<dbReference type="GO" id="GO:0005886">
    <property type="term" value="C:plasma membrane"/>
    <property type="evidence" value="ECO:0007669"/>
    <property type="project" value="UniProtKB-SubCell"/>
</dbReference>
<dbReference type="GO" id="GO:0015087">
    <property type="term" value="F:cobalt ion transmembrane transporter activity"/>
    <property type="evidence" value="ECO:0007669"/>
    <property type="project" value="InterPro"/>
</dbReference>
<dbReference type="GO" id="GO:0015095">
    <property type="term" value="F:magnesium ion transmembrane transporter activity"/>
    <property type="evidence" value="ECO:0007669"/>
    <property type="project" value="InterPro"/>
</dbReference>
<dbReference type="GO" id="GO:0015099">
    <property type="term" value="F:nickel cation transmembrane transporter activity"/>
    <property type="evidence" value="ECO:0007669"/>
    <property type="project" value="TreeGrafter"/>
</dbReference>
<dbReference type="CDD" id="cd12835">
    <property type="entry name" value="EcCorA-like_1"/>
    <property type="match status" value="1"/>
</dbReference>
<dbReference type="FunFam" id="1.20.58.340:FF:000001">
    <property type="entry name" value="Magnesium transport protein CorA"/>
    <property type="match status" value="1"/>
</dbReference>
<dbReference type="Gene3D" id="3.30.460.20">
    <property type="entry name" value="CorA soluble domain-like"/>
    <property type="match status" value="1"/>
</dbReference>
<dbReference type="Gene3D" id="1.20.58.340">
    <property type="entry name" value="Magnesium transport protein CorA, transmembrane region"/>
    <property type="match status" value="1"/>
</dbReference>
<dbReference type="InterPro" id="IPR045861">
    <property type="entry name" value="CorA_cytoplasmic_dom"/>
</dbReference>
<dbReference type="InterPro" id="IPR050829">
    <property type="entry name" value="CorA_MIT"/>
</dbReference>
<dbReference type="InterPro" id="IPR045863">
    <property type="entry name" value="CorA_TM1_TM2"/>
</dbReference>
<dbReference type="InterPro" id="IPR004488">
    <property type="entry name" value="Mg/Co-transport_prot_CorA"/>
</dbReference>
<dbReference type="InterPro" id="IPR002523">
    <property type="entry name" value="MgTranspt_CorA/ZnTranspt_ZntB"/>
</dbReference>
<dbReference type="NCBIfam" id="TIGR00383">
    <property type="entry name" value="corA"/>
    <property type="match status" value="1"/>
</dbReference>
<dbReference type="PANTHER" id="PTHR47685">
    <property type="entry name" value="MAGNESIUM TRANSPORT PROTEIN CORA"/>
    <property type="match status" value="1"/>
</dbReference>
<dbReference type="PANTHER" id="PTHR47685:SF1">
    <property type="entry name" value="MAGNESIUM TRANSPORT PROTEIN CORA"/>
    <property type="match status" value="1"/>
</dbReference>
<dbReference type="Pfam" id="PF01544">
    <property type="entry name" value="CorA"/>
    <property type="match status" value="1"/>
</dbReference>
<dbReference type="SUPFAM" id="SSF143865">
    <property type="entry name" value="CorA soluble domain-like"/>
    <property type="match status" value="1"/>
</dbReference>
<dbReference type="SUPFAM" id="SSF144083">
    <property type="entry name" value="Magnesium transport protein CorA, transmembrane region"/>
    <property type="match status" value="1"/>
</dbReference>